<organism>
    <name type="scientific">Homo sapiens</name>
    <name type="common">Human</name>
    <dbReference type="NCBI Taxonomy" id="9606"/>
    <lineage>
        <taxon>Eukaryota</taxon>
        <taxon>Metazoa</taxon>
        <taxon>Chordata</taxon>
        <taxon>Craniata</taxon>
        <taxon>Vertebrata</taxon>
        <taxon>Euteleostomi</taxon>
        <taxon>Mammalia</taxon>
        <taxon>Eutheria</taxon>
        <taxon>Euarchontoglires</taxon>
        <taxon>Primates</taxon>
        <taxon>Haplorrhini</taxon>
        <taxon>Catarrhini</taxon>
        <taxon>Hominidae</taxon>
        <taxon>Homo</taxon>
    </lineage>
</organism>
<name>VIAAT_HUMAN</name>
<proteinExistence type="evidence at protein level"/>
<protein>
    <recommendedName>
        <fullName evidence="8">Vesicular inhibitory amino acid transporter</fullName>
    </recommendedName>
    <alternativeName>
        <fullName>GABA and glycine transporter</fullName>
    </alternativeName>
    <alternativeName>
        <fullName>Solute carrier family 32 member 1</fullName>
    </alternativeName>
    <alternativeName>
        <fullName>Vesicular GABA transporter</fullName>
        <shortName>hVIAAT</shortName>
    </alternativeName>
</protein>
<dbReference type="EMBL" id="AY044836">
    <property type="protein sequence ID" value="AAK98782.1"/>
    <property type="molecule type" value="mRNA"/>
</dbReference>
<dbReference type="EMBL" id="AK055051">
    <property type="protein sequence ID" value="BAB70846.1"/>
    <property type="molecule type" value="mRNA"/>
</dbReference>
<dbReference type="EMBL" id="AL133519">
    <property type="status" value="NOT_ANNOTATED_CDS"/>
    <property type="molecule type" value="Genomic_DNA"/>
</dbReference>
<dbReference type="EMBL" id="BC036458">
    <property type="protein sequence ID" value="AAH36458.2"/>
    <property type="status" value="ALT_INIT"/>
    <property type="molecule type" value="mRNA"/>
</dbReference>
<dbReference type="EMBL" id="BC053582">
    <property type="protein sequence ID" value="AAH53582.1"/>
    <property type="molecule type" value="mRNA"/>
</dbReference>
<dbReference type="CCDS" id="CCDS13307.1"/>
<dbReference type="RefSeq" id="NP_542119.1">
    <property type="nucleotide sequence ID" value="NM_080552.3"/>
</dbReference>
<dbReference type="SMR" id="Q9H598"/>
<dbReference type="BioGRID" id="126644">
    <property type="interactions" value="7"/>
</dbReference>
<dbReference type="FunCoup" id="Q9H598">
    <property type="interactions" value="344"/>
</dbReference>
<dbReference type="IntAct" id="Q9H598">
    <property type="interactions" value="7"/>
</dbReference>
<dbReference type="MINT" id="Q9H598"/>
<dbReference type="STRING" id="9606.ENSP00000217420"/>
<dbReference type="DrugBank" id="DB00145">
    <property type="generic name" value="Glycine"/>
</dbReference>
<dbReference type="GuidetoPHARMACOLOGY" id="1133"/>
<dbReference type="TCDB" id="2.A.18.5.4">
    <property type="family name" value="the amino acid/auxin permease (aaap) family"/>
</dbReference>
<dbReference type="GlyCosmos" id="Q9H598">
    <property type="glycosylation" value="1 site, 1 glycan"/>
</dbReference>
<dbReference type="GlyGen" id="Q9H598">
    <property type="glycosylation" value="1 site, 1 O-linked glycan (1 site)"/>
</dbReference>
<dbReference type="iPTMnet" id="Q9H598"/>
<dbReference type="PhosphoSitePlus" id="Q9H598"/>
<dbReference type="SwissPalm" id="Q9H598"/>
<dbReference type="BioMuta" id="SLC32A1"/>
<dbReference type="DMDM" id="29428257"/>
<dbReference type="MassIVE" id="Q9H598"/>
<dbReference type="PaxDb" id="9606-ENSP00000217420"/>
<dbReference type="PeptideAtlas" id="Q9H598"/>
<dbReference type="ProteomicsDB" id="80902"/>
<dbReference type="Antibodypedia" id="26904">
    <property type="antibodies" value="275 antibodies from 28 providers"/>
</dbReference>
<dbReference type="DNASU" id="140679"/>
<dbReference type="Ensembl" id="ENST00000217420.2">
    <property type="protein sequence ID" value="ENSP00000217420.1"/>
    <property type="gene ID" value="ENSG00000101438.4"/>
</dbReference>
<dbReference type="GeneID" id="140679"/>
<dbReference type="KEGG" id="hsa:140679"/>
<dbReference type="MANE-Select" id="ENST00000217420.2">
    <property type="protein sequence ID" value="ENSP00000217420.1"/>
    <property type="RefSeq nucleotide sequence ID" value="NM_080552.3"/>
    <property type="RefSeq protein sequence ID" value="NP_542119.1"/>
</dbReference>
<dbReference type="UCSC" id="uc002xjc.3">
    <property type="organism name" value="human"/>
</dbReference>
<dbReference type="AGR" id="HGNC:11018"/>
<dbReference type="CTD" id="140679"/>
<dbReference type="DisGeNET" id="140679"/>
<dbReference type="GeneCards" id="SLC32A1"/>
<dbReference type="HGNC" id="HGNC:11018">
    <property type="gene designation" value="SLC32A1"/>
</dbReference>
<dbReference type="HPA" id="ENSG00000101438">
    <property type="expression patterns" value="Tissue enriched (brain)"/>
</dbReference>
<dbReference type="MalaCards" id="SLC32A1"/>
<dbReference type="MIM" id="616440">
    <property type="type" value="gene"/>
</dbReference>
<dbReference type="MIM" id="620755">
    <property type="type" value="phenotype"/>
</dbReference>
<dbReference type="MIM" id="620774">
    <property type="type" value="phenotype"/>
</dbReference>
<dbReference type="neXtProt" id="NX_Q9H598"/>
<dbReference type="OpenTargets" id="ENSG00000101438"/>
<dbReference type="Orphanet" id="1934">
    <property type="disease" value="Early infantile developmental and epileptic encephalopathy"/>
</dbReference>
<dbReference type="PharmGKB" id="PA401"/>
<dbReference type="VEuPathDB" id="HostDB:ENSG00000101438"/>
<dbReference type="eggNOG" id="KOG4303">
    <property type="taxonomic scope" value="Eukaryota"/>
</dbReference>
<dbReference type="GeneTree" id="ENSGT00490000043380"/>
<dbReference type="HOGENOM" id="CLU_036432_0_0_1"/>
<dbReference type="InParanoid" id="Q9H598"/>
<dbReference type="OMA" id="MKWTHIA"/>
<dbReference type="OrthoDB" id="6021076at2759"/>
<dbReference type="PAN-GO" id="Q9H598">
    <property type="GO annotations" value="10 GO annotations based on evolutionary models"/>
</dbReference>
<dbReference type="PhylomeDB" id="Q9H598"/>
<dbReference type="TreeFam" id="TF312818"/>
<dbReference type="PathwayCommons" id="Q9H598"/>
<dbReference type="Reactome" id="R-HSA-425393">
    <property type="pathway name" value="Transport of inorganic cations/anions and amino acids/oligopeptides"/>
</dbReference>
<dbReference type="Reactome" id="R-HSA-888590">
    <property type="pathway name" value="GABA synthesis, release, reuptake and degradation"/>
</dbReference>
<dbReference type="SignaLink" id="Q9H598"/>
<dbReference type="BioGRID-ORCS" id="140679">
    <property type="hits" value="18 hits in 1146 CRISPR screens"/>
</dbReference>
<dbReference type="GeneWiki" id="SLC32A1"/>
<dbReference type="GenomeRNAi" id="140679"/>
<dbReference type="Pharos" id="Q9H598">
    <property type="development level" value="Tchem"/>
</dbReference>
<dbReference type="PRO" id="PR:Q9H598"/>
<dbReference type="Proteomes" id="UP000005640">
    <property type="component" value="Chromosome 20"/>
</dbReference>
<dbReference type="RNAct" id="Q9H598">
    <property type="molecule type" value="protein"/>
</dbReference>
<dbReference type="Bgee" id="ENSG00000101438">
    <property type="expression patterns" value="Expressed in nucleus accumbens and 56 other cell types or tissues"/>
</dbReference>
<dbReference type="GO" id="GO:0009986">
    <property type="term" value="C:cell surface"/>
    <property type="evidence" value="ECO:0007669"/>
    <property type="project" value="Ensembl"/>
</dbReference>
<dbReference type="GO" id="GO:0051286">
    <property type="term" value="C:cell tip"/>
    <property type="evidence" value="ECO:0007669"/>
    <property type="project" value="Ensembl"/>
</dbReference>
<dbReference type="GO" id="GO:0061202">
    <property type="term" value="C:clathrin-sculpted gamma-aminobutyric acid transport vesicle membrane"/>
    <property type="evidence" value="ECO:0000304"/>
    <property type="project" value="Reactome"/>
</dbReference>
<dbReference type="GO" id="GO:0044316">
    <property type="term" value="C:cone cell pedicle"/>
    <property type="evidence" value="ECO:0007669"/>
    <property type="project" value="Ensembl"/>
</dbReference>
<dbReference type="GO" id="GO:0030425">
    <property type="term" value="C:dendrite"/>
    <property type="evidence" value="ECO:0000314"/>
    <property type="project" value="MGI"/>
</dbReference>
<dbReference type="GO" id="GO:0044292">
    <property type="term" value="C:dendrite terminus"/>
    <property type="evidence" value="ECO:0000318"/>
    <property type="project" value="GO_Central"/>
</dbReference>
<dbReference type="GO" id="GO:0098982">
    <property type="term" value="C:GABA-ergic synapse"/>
    <property type="evidence" value="ECO:0007669"/>
    <property type="project" value="Ensembl"/>
</dbReference>
<dbReference type="GO" id="GO:0060077">
    <property type="term" value="C:inhibitory synapse"/>
    <property type="evidence" value="ECO:0007669"/>
    <property type="project" value="Ensembl"/>
</dbReference>
<dbReference type="GO" id="GO:0043005">
    <property type="term" value="C:neuron projection"/>
    <property type="evidence" value="ECO:0000314"/>
    <property type="project" value="MGI"/>
</dbReference>
<dbReference type="GO" id="GO:0044306">
    <property type="term" value="C:neuron projection terminus"/>
    <property type="evidence" value="ECO:0000314"/>
    <property type="project" value="MGI"/>
</dbReference>
<dbReference type="GO" id="GO:0005886">
    <property type="term" value="C:plasma membrane"/>
    <property type="evidence" value="ECO:0000304"/>
    <property type="project" value="Reactome"/>
</dbReference>
<dbReference type="GO" id="GO:0098793">
    <property type="term" value="C:presynapse"/>
    <property type="evidence" value="ECO:0000250"/>
    <property type="project" value="UniProtKB"/>
</dbReference>
<dbReference type="GO" id="GO:0048786">
    <property type="term" value="C:presynaptic active zone"/>
    <property type="evidence" value="ECO:0007669"/>
    <property type="project" value="Ensembl"/>
</dbReference>
<dbReference type="GO" id="GO:0008021">
    <property type="term" value="C:synaptic vesicle"/>
    <property type="evidence" value="ECO:0000250"/>
    <property type="project" value="UniProtKB"/>
</dbReference>
<dbReference type="GO" id="GO:0030672">
    <property type="term" value="C:synaptic vesicle membrane"/>
    <property type="evidence" value="ECO:0000318"/>
    <property type="project" value="GO_Central"/>
</dbReference>
<dbReference type="GO" id="GO:0015171">
    <property type="term" value="F:amino acid transmembrane transporter activity"/>
    <property type="evidence" value="ECO:0000304"/>
    <property type="project" value="Reactome"/>
</dbReference>
<dbReference type="GO" id="GO:0015185">
    <property type="term" value="F:gamma-aminobutyric acid transmembrane transporter activity"/>
    <property type="evidence" value="ECO:0000250"/>
    <property type="project" value="UniProtKB"/>
</dbReference>
<dbReference type="GO" id="GO:0140800">
    <property type="term" value="F:gamma-aminobutyric acid:proton antiporter activity"/>
    <property type="evidence" value="ECO:0000250"/>
    <property type="project" value="UniProtKB"/>
</dbReference>
<dbReference type="GO" id="GO:0015495">
    <property type="term" value="F:gamma-aminobutyric acid:proton symporter activity"/>
    <property type="evidence" value="ECO:0000304"/>
    <property type="project" value="Reactome"/>
</dbReference>
<dbReference type="GO" id="GO:0015187">
    <property type="term" value="F:glycine transmembrane transporter activity"/>
    <property type="evidence" value="ECO:0000250"/>
    <property type="project" value="UniProtKB"/>
</dbReference>
<dbReference type="GO" id="GO:0140799">
    <property type="term" value="F:glycine:proton antiporter activity"/>
    <property type="evidence" value="ECO:0000250"/>
    <property type="project" value="UniProtKB"/>
</dbReference>
<dbReference type="GO" id="GO:0001762">
    <property type="term" value="P:beta-alanine transport"/>
    <property type="evidence" value="ECO:0000250"/>
    <property type="project" value="UniProtKB"/>
</dbReference>
<dbReference type="GO" id="GO:0051939">
    <property type="term" value="P:gamma-aminobutyric acid import"/>
    <property type="evidence" value="ECO:0000250"/>
    <property type="project" value="UniProtKB"/>
</dbReference>
<dbReference type="GO" id="GO:0015812">
    <property type="term" value="P:gamma-aminobutyric acid transport"/>
    <property type="evidence" value="ECO:0000250"/>
    <property type="project" value="UniProtKB"/>
</dbReference>
<dbReference type="GO" id="GO:0015816">
    <property type="term" value="P:glycine transport"/>
    <property type="evidence" value="ECO:0000250"/>
    <property type="project" value="UniProtKB"/>
</dbReference>
<dbReference type="GO" id="GO:0021766">
    <property type="term" value="P:hippocampus development"/>
    <property type="evidence" value="ECO:0007669"/>
    <property type="project" value="Ensembl"/>
</dbReference>
<dbReference type="GO" id="GO:0006811">
    <property type="term" value="P:monoatomic ion transport"/>
    <property type="evidence" value="ECO:0000304"/>
    <property type="project" value="Reactome"/>
</dbReference>
<dbReference type="GO" id="GO:0098700">
    <property type="term" value="P:neurotransmitter loading into synaptic vesicle"/>
    <property type="evidence" value="ECO:0000318"/>
    <property type="project" value="GO_Central"/>
</dbReference>
<dbReference type="GO" id="GO:0007269">
    <property type="term" value="P:neurotransmitter secretion"/>
    <property type="evidence" value="ECO:0000304"/>
    <property type="project" value="Reactome"/>
</dbReference>
<dbReference type="InterPro" id="IPR013057">
    <property type="entry name" value="AA_transpt_TM"/>
</dbReference>
<dbReference type="PANTHER" id="PTHR22950">
    <property type="entry name" value="AMINO ACID TRANSPORTER"/>
    <property type="match status" value="1"/>
</dbReference>
<dbReference type="PANTHER" id="PTHR22950:SF689">
    <property type="entry name" value="VESICULAR INHIBITORY AMINO ACID TRANSPORTER"/>
    <property type="match status" value="1"/>
</dbReference>
<dbReference type="Pfam" id="PF01490">
    <property type="entry name" value="Aa_trans"/>
    <property type="match status" value="1"/>
</dbReference>
<gene>
    <name evidence="10" type="primary">SLC32A1</name>
    <name type="synonym">VGAT</name>
    <name type="synonym">VIAAT</name>
</gene>
<reference key="1">
    <citation type="journal article" date="2002" name="Diabetes">
        <title>Expression of the vesicular inhibitory amino acid transporter in pancreatic islet cells: distribution of the transporter within rat islets.</title>
        <authorList>
            <person name="Chessler S.D."/>
            <person name="Simonson W.T."/>
            <person name="Sweet I.R."/>
            <person name="Hammerle L.P."/>
        </authorList>
    </citation>
    <scope>NUCLEOTIDE SEQUENCE [MRNA]</scope>
    <source>
        <tissue>Brain</tissue>
    </source>
</reference>
<reference key="2">
    <citation type="journal article" date="2004" name="Nat. Genet.">
        <title>Complete sequencing and characterization of 21,243 full-length human cDNAs.</title>
        <authorList>
            <person name="Ota T."/>
            <person name="Suzuki Y."/>
            <person name="Nishikawa T."/>
            <person name="Otsuki T."/>
            <person name="Sugiyama T."/>
            <person name="Irie R."/>
            <person name="Wakamatsu A."/>
            <person name="Hayashi K."/>
            <person name="Sato H."/>
            <person name="Nagai K."/>
            <person name="Kimura K."/>
            <person name="Makita H."/>
            <person name="Sekine M."/>
            <person name="Obayashi M."/>
            <person name="Nishi T."/>
            <person name="Shibahara T."/>
            <person name="Tanaka T."/>
            <person name="Ishii S."/>
            <person name="Yamamoto J."/>
            <person name="Saito K."/>
            <person name="Kawai Y."/>
            <person name="Isono Y."/>
            <person name="Nakamura Y."/>
            <person name="Nagahari K."/>
            <person name="Murakami K."/>
            <person name="Yasuda T."/>
            <person name="Iwayanagi T."/>
            <person name="Wagatsuma M."/>
            <person name="Shiratori A."/>
            <person name="Sudo H."/>
            <person name="Hosoiri T."/>
            <person name="Kaku Y."/>
            <person name="Kodaira H."/>
            <person name="Kondo H."/>
            <person name="Sugawara M."/>
            <person name="Takahashi M."/>
            <person name="Kanda K."/>
            <person name="Yokoi T."/>
            <person name="Furuya T."/>
            <person name="Kikkawa E."/>
            <person name="Omura Y."/>
            <person name="Abe K."/>
            <person name="Kamihara K."/>
            <person name="Katsuta N."/>
            <person name="Sato K."/>
            <person name="Tanikawa M."/>
            <person name="Yamazaki M."/>
            <person name="Ninomiya K."/>
            <person name="Ishibashi T."/>
            <person name="Yamashita H."/>
            <person name="Murakawa K."/>
            <person name="Fujimori K."/>
            <person name="Tanai H."/>
            <person name="Kimata M."/>
            <person name="Watanabe M."/>
            <person name="Hiraoka S."/>
            <person name="Chiba Y."/>
            <person name="Ishida S."/>
            <person name="Ono Y."/>
            <person name="Takiguchi S."/>
            <person name="Watanabe S."/>
            <person name="Yosida M."/>
            <person name="Hotuta T."/>
            <person name="Kusano J."/>
            <person name="Kanehori K."/>
            <person name="Takahashi-Fujii A."/>
            <person name="Hara H."/>
            <person name="Tanase T.-O."/>
            <person name="Nomura Y."/>
            <person name="Togiya S."/>
            <person name="Komai F."/>
            <person name="Hara R."/>
            <person name="Takeuchi K."/>
            <person name="Arita M."/>
            <person name="Imose N."/>
            <person name="Musashino K."/>
            <person name="Yuuki H."/>
            <person name="Oshima A."/>
            <person name="Sasaki N."/>
            <person name="Aotsuka S."/>
            <person name="Yoshikawa Y."/>
            <person name="Matsunawa H."/>
            <person name="Ichihara T."/>
            <person name="Shiohata N."/>
            <person name="Sano S."/>
            <person name="Moriya S."/>
            <person name="Momiyama H."/>
            <person name="Satoh N."/>
            <person name="Takami S."/>
            <person name="Terashima Y."/>
            <person name="Suzuki O."/>
            <person name="Nakagawa S."/>
            <person name="Senoh A."/>
            <person name="Mizoguchi H."/>
            <person name="Goto Y."/>
            <person name="Shimizu F."/>
            <person name="Wakebe H."/>
            <person name="Hishigaki H."/>
            <person name="Watanabe T."/>
            <person name="Sugiyama A."/>
            <person name="Takemoto M."/>
            <person name="Kawakami B."/>
            <person name="Yamazaki M."/>
            <person name="Watanabe K."/>
            <person name="Kumagai A."/>
            <person name="Itakura S."/>
            <person name="Fukuzumi Y."/>
            <person name="Fujimori Y."/>
            <person name="Komiyama M."/>
            <person name="Tashiro H."/>
            <person name="Tanigami A."/>
            <person name="Fujiwara T."/>
            <person name="Ono T."/>
            <person name="Yamada K."/>
            <person name="Fujii Y."/>
            <person name="Ozaki K."/>
            <person name="Hirao M."/>
            <person name="Ohmori Y."/>
            <person name="Kawabata A."/>
            <person name="Hikiji T."/>
            <person name="Kobatake N."/>
            <person name="Inagaki H."/>
            <person name="Ikema Y."/>
            <person name="Okamoto S."/>
            <person name="Okitani R."/>
            <person name="Kawakami T."/>
            <person name="Noguchi S."/>
            <person name="Itoh T."/>
            <person name="Shigeta K."/>
            <person name="Senba T."/>
            <person name="Matsumura K."/>
            <person name="Nakajima Y."/>
            <person name="Mizuno T."/>
            <person name="Morinaga M."/>
            <person name="Sasaki M."/>
            <person name="Togashi T."/>
            <person name="Oyama M."/>
            <person name="Hata H."/>
            <person name="Watanabe M."/>
            <person name="Komatsu T."/>
            <person name="Mizushima-Sugano J."/>
            <person name="Satoh T."/>
            <person name="Shirai Y."/>
            <person name="Takahashi Y."/>
            <person name="Nakagawa K."/>
            <person name="Okumura K."/>
            <person name="Nagase T."/>
            <person name="Nomura N."/>
            <person name="Kikuchi H."/>
            <person name="Masuho Y."/>
            <person name="Yamashita R."/>
            <person name="Nakai K."/>
            <person name="Yada T."/>
            <person name="Nakamura Y."/>
            <person name="Ohara O."/>
            <person name="Isogai T."/>
            <person name="Sugano S."/>
        </authorList>
    </citation>
    <scope>NUCLEOTIDE SEQUENCE [LARGE SCALE MRNA]</scope>
    <source>
        <tissue>Brain</tissue>
    </source>
</reference>
<reference key="3">
    <citation type="journal article" date="2001" name="Nature">
        <title>The DNA sequence and comparative analysis of human chromosome 20.</title>
        <authorList>
            <person name="Deloukas P."/>
            <person name="Matthews L.H."/>
            <person name="Ashurst J.L."/>
            <person name="Burton J."/>
            <person name="Gilbert J.G.R."/>
            <person name="Jones M."/>
            <person name="Stavrides G."/>
            <person name="Almeida J.P."/>
            <person name="Babbage A.K."/>
            <person name="Bagguley C.L."/>
            <person name="Bailey J."/>
            <person name="Barlow K.F."/>
            <person name="Bates K.N."/>
            <person name="Beard L.M."/>
            <person name="Beare D.M."/>
            <person name="Beasley O.P."/>
            <person name="Bird C.P."/>
            <person name="Blakey S.E."/>
            <person name="Bridgeman A.M."/>
            <person name="Brown A.J."/>
            <person name="Buck D."/>
            <person name="Burrill W.D."/>
            <person name="Butler A.P."/>
            <person name="Carder C."/>
            <person name="Carter N.P."/>
            <person name="Chapman J.C."/>
            <person name="Clamp M."/>
            <person name="Clark G."/>
            <person name="Clark L.N."/>
            <person name="Clark S.Y."/>
            <person name="Clee C.M."/>
            <person name="Clegg S."/>
            <person name="Cobley V.E."/>
            <person name="Collier R.E."/>
            <person name="Connor R.E."/>
            <person name="Corby N.R."/>
            <person name="Coulson A."/>
            <person name="Coville G.J."/>
            <person name="Deadman R."/>
            <person name="Dhami P.D."/>
            <person name="Dunn M."/>
            <person name="Ellington A.G."/>
            <person name="Frankland J.A."/>
            <person name="Fraser A."/>
            <person name="French L."/>
            <person name="Garner P."/>
            <person name="Grafham D.V."/>
            <person name="Griffiths C."/>
            <person name="Griffiths M.N.D."/>
            <person name="Gwilliam R."/>
            <person name="Hall R.E."/>
            <person name="Hammond S."/>
            <person name="Harley J.L."/>
            <person name="Heath P.D."/>
            <person name="Ho S."/>
            <person name="Holden J.L."/>
            <person name="Howden P.J."/>
            <person name="Huckle E."/>
            <person name="Hunt A.R."/>
            <person name="Hunt S.E."/>
            <person name="Jekosch K."/>
            <person name="Johnson C.M."/>
            <person name="Johnson D."/>
            <person name="Kay M.P."/>
            <person name="Kimberley A.M."/>
            <person name="King A."/>
            <person name="Knights A."/>
            <person name="Laird G.K."/>
            <person name="Lawlor S."/>
            <person name="Lehvaeslaiho M.H."/>
            <person name="Leversha M.A."/>
            <person name="Lloyd C."/>
            <person name="Lloyd D.M."/>
            <person name="Lovell J.D."/>
            <person name="Marsh V.L."/>
            <person name="Martin S.L."/>
            <person name="McConnachie L.J."/>
            <person name="McLay K."/>
            <person name="McMurray A.A."/>
            <person name="Milne S.A."/>
            <person name="Mistry D."/>
            <person name="Moore M.J.F."/>
            <person name="Mullikin J.C."/>
            <person name="Nickerson T."/>
            <person name="Oliver K."/>
            <person name="Parker A."/>
            <person name="Patel R."/>
            <person name="Pearce T.A.V."/>
            <person name="Peck A.I."/>
            <person name="Phillimore B.J.C.T."/>
            <person name="Prathalingam S.R."/>
            <person name="Plumb R.W."/>
            <person name="Ramsay H."/>
            <person name="Rice C.M."/>
            <person name="Ross M.T."/>
            <person name="Scott C.E."/>
            <person name="Sehra H.K."/>
            <person name="Shownkeen R."/>
            <person name="Sims S."/>
            <person name="Skuce C.D."/>
            <person name="Smith M.L."/>
            <person name="Soderlund C."/>
            <person name="Steward C.A."/>
            <person name="Sulston J.E."/>
            <person name="Swann R.M."/>
            <person name="Sycamore N."/>
            <person name="Taylor R."/>
            <person name="Tee L."/>
            <person name="Thomas D.W."/>
            <person name="Thorpe A."/>
            <person name="Tracey A."/>
            <person name="Tromans A.C."/>
            <person name="Vaudin M."/>
            <person name="Wall M."/>
            <person name="Wallis J.M."/>
            <person name="Whitehead S.L."/>
            <person name="Whittaker P."/>
            <person name="Willey D.L."/>
            <person name="Williams L."/>
            <person name="Williams S.A."/>
            <person name="Wilming L."/>
            <person name="Wray P.W."/>
            <person name="Hubbard T."/>
            <person name="Durbin R.M."/>
            <person name="Bentley D.R."/>
            <person name="Beck S."/>
            <person name="Rogers J."/>
        </authorList>
    </citation>
    <scope>NUCLEOTIDE SEQUENCE [LARGE SCALE GENOMIC DNA]</scope>
</reference>
<reference key="4">
    <citation type="journal article" date="2004" name="Genome Res.">
        <title>The status, quality, and expansion of the NIH full-length cDNA project: the Mammalian Gene Collection (MGC).</title>
        <authorList>
            <consortium name="The MGC Project Team"/>
        </authorList>
    </citation>
    <scope>NUCLEOTIDE SEQUENCE [LARGE SCALE MRNA]</scope>
    <source>
        <tissue>Brain</tissue>
    </source>
</reference>
<reference key="5">
    <citation type="journal article" date="2002" name="J. Comp. Neurol.">
        <title>Cellular localization of the vesicular inhibitory amino acid transporter in the mouse and human retina.</title>
        <authorList>
            <person name="Jellali A."/>
            <person name="Stussi-Garaud C."/>
            <person name="Gasnier B."/>
            <person name="Rendon A."/>
            <person name="Sahel J.-A."/>
            <person name="Dreyfus H."/>
            <person name="Picaud S."/>
        </authorList>
    </citation>
    <scope>TISSUE SPECIFICITY</scope>
</reference>
<reference key="6">
    <citation type="journal article" date="2021" name="Neurology">
        <title>Association of SLC32A1 Missense Variants With Genetic Epilepsy With Febrile Seizures Plus.</title>
        <authorList>
            <person name="Heron S.E."/>
            <person name="Regan B.M."/>
            <person name="Harris R.V."/>
            <person name="Gardner A.E."/>
            <person name="Coleman M.J."/>
            <person name="Bennett M.F."/>
            <person name="Grinton B.E."/>
            <person name="Helbig K.L."/>
            <person name="Sperling M.R."/>
            <person name="Haut S."/>
            <person name="Geller E.B."/>
            <person name="Widdess-Walsh P."/>
            <person name="Pelekanos J.T."/>
            <person name="Bahlo M."/>
            <person name="Petrovski S."/>
            <person name="Heinzen E.L."/>
            <person name="Hildebrand M.S."/>
            <person name="Corbett M.A."/>
            <person name="Scheffer I.E."/>
            <person name="Gecz J."/>
            <person name="Berkovic S.F."/>
        </authorList>
    </citation>
    <scope>INVOLVEMENT IN GEFSP12</scope>
    <scope>VARIANTS GEFSP12 CYS-43; ALA-263; THR-330; PHE-445; ASP-461; ARG-464; SER-465 AND PRO-468</scope>
</reference>
<reference key="7">
    <citation type="journal article" date="2022" name="Ann. Neurol.">
        <title>De Novo Missense Variants in SLC32A1 Cause a Developmental and Epileptic Encephalopathy Due to Impaired GABAergic Neurotransmission.</title>
        <authorList>
            <person name="Platzer K."/>
            <person name="Sticht H."/>
            <person name="Bupp C."/>
            <person name="Ganapathi M."/>
            <person name="Pereira E.M."/>
            <person name="Le Guyader G."/>
            <person name="Bilan F."/>
            <person name="Henderson L.B."/>
            <person name="Lemke J.R."/>
            <person name="Taschenberger H."/>
            <person name="Brose N."/>
            <person name="Abou Jamra R."/>
            <person name="Wojcik S.M."/>
        </authorList>
    </citation>
    <scope>INVOLVEMENT IN DEE114</scope>
    <scope>VARIANTS DEE114 THR-91; MET-263; PRO-269 AND CYS-322</scope>
</reference>
<comment type="function">
    <text evidence="1 2">Antiporter that exchanges vesicular protons for cytosolic 4-aminobutanoate or to a lesser extend glycine, thus allowing their secretion from nerve terminals. The transport is equally dependent on the chemical and electrical components of the proton gradient (By similarity). May also transport beta-alanine (By similarity). Acidification of GABAergic synaptic vesicles is a prerequisite for 4-aminobutanoate uptake (By similarity).</text>
</comment>
<comment type="catalytic activity">
    <reaction evidence="2">
        <text>4-aminobutanoate(out) + n H(+)(in) = 4-aminobutanoate(in) + n H(+)(out)</text>
        <dbReference type="Rhea" id="RHEA:70979"/>
        <dbReference type="ChEBI" id="CHEBI:15378"/>
        <dbReference type="ChEBI" id="CHEBI:59888"/>
    </reaction>
</comment>
<comment type="catalytic activity">
    <reaction evidence="2">
        <text>glycine(out) + n H(+)(in) = glycine(in) + n H(+)(out)</text>
        <dbReference type="Rhea" id="RHEA:70983"/>
        <dbReference type="ChEBI" id="CHEBI:15378"/>
        <dbReference type="ChEBI" id="CHEBI:57305"/>
    </reaction>
</comment>
<comment type="catalytic activity">
    <reaction evidence="1">
        <text>beta-alanine(out) + n H(+)(in) = beta-alanine(in) + n H(+)(out)</text>
        <dbReference type="Rhea" id="RHEA:70987"/>
        <dbReference type="ChEBI" id="CHEBI:15378"/>
        <dbReference type="ChEBI" id="CHEBI:57966"/>
    </reaction>
</comment>
<comment type="subcellular location">
    <subcellularLocation>
        <location evidence="1">Cytoplasmic vesicle membrane</location>
        <topology evidence="3">Multi-pass membrane protein</topology>
    </subcellularLocation>
    <subcellularLocation>
        <location evidence="2">Presynapse</location>
    </subcellularLocation>
    <text evidence="1">Presents in glycine-, GABA- or GABA- and glycine-containing boutons.</text>
</comment>
<comment type="tissue specificity">
    <text evidence="5">Retina. Expressed throughout the horizontal cells or more specifically at the terminals.</text>
</comment>
<comment type="disease" evidence="6">
    <disease id="DI-06865">
        <name>Generalized epilepsy with febrile seizures plus 12</name>
        <acronym>GEFSP12</acronym>
        <description>An autosomal dominant neurologic disorder with variable expressivity and incomplete penetrance. Affected individuals have variable types of seizures, most often febrile seizures, sometimes combined with non-febrile focal or generalized seizures. Rarely, afebrile tonic-clonic seizures have been observed.</description>
        <dbReference type="MIM" id="620755"/>
    </disease>
    <text>The disease may be caused by variants affecting the gene represented in this entry.</text>
</comment>
<comment type="disease" evidence="7">
    <disease id="DI-06866">
        <name>Developmental and epileptic encephalopathy 114</name>
        <acronym>DEE114</acronym>
        <description>A form of epileptic encephalopathy, a heterogeneous group of early-onset epilepsies characterized by refractory seizures, neurodevelopmental impairment, and poor prognosis. Development is normal prior to seizure onset, after which cognitive and motor delays become apparent. DEE114 is an autosomal dominant form characterized by moderate-to-severe intellectual disability, onset of epilepsy within the first 18 months of life, and a choreiform, dystonic or dyskinetic movement disorder.</description>
        <dbReference type="MIM" id="620774"/>
    </disease>
    <text>The disease may be caused by variants affecting the gene represented in this entry.</text>
</comment>
<comment type="similarity">
    <text evidence="9">Belongs to the amino acid/polyamine transporter 2 family.</text>
</comment>
<comment type="caution">
    <text evidence="1 2">Juge et al. shows that SLC32A1 is a symporter of both 4-aminobutanoate or glycine or beta-alanine with Cl(-) that operates according an electrical gradient without the need for a chemical gradient (By similarity). However Farsi et al. and Egashira et al. confirm that SLC32A1 is an antiporter that exchanges vesicular protons for cytosolic 4-aminobutanoate or glycine and exclude any coupling with chloride (By similarity).</text>
</comment>
<comment type="sequence caution" evidence="9">
    <conflict type="erroneous initiation">
        <sequence resource="EMBL-CDS" id="AAH36458"/>
    </conflict>
    <text>Truncated N-terminus.</text>
</comment>
<keyword id="KW-0966">Cell projection</keyword>
<keyword id="KW-0968">Cytoplasmic vesicle</keyword>
<keyword id="KW-0225">Disease variant</keyword>
<keyword id="KW-0887">Epilepsy</keyword>
<keyword id="KW-0991">Intellectual disability</keyword>
<keyword id="KW-0472">Membrane</keyword>
<keyword id="KW-0532">Neurotransmitter transport</keyword>
<keyword id="KW-0944">Nitration</keyword>
<keyword id="KW-1267">Proteomics identification</keyword>
<keyword id="KW-1185">Reference proteome</keyword>
<keyword id="KW-0770">Synapse</keyword>
<keyword id="KW-0812">Transmembrane</keyword>
<keyword id="KW-1133">Transmembrane helix</keyword>
<keyword id="KW-0813">Transport</keyword>
<feature type="chain" id="PRO_0000093820" description="Vesicular inhibitory amino acid transporter">
    <location>
        <begin position="1"/>
        <end position="525"/>
    </location>
</feature>
<feature type="topological domain" description="Cytoplasmic" evidence="1">
    <location>
        <begin position="1"/>
        <end position="132"/>
    </location>
</feature>
<feature type="transmembrane region" description="Helical" evidence="3">
    <location>
        <begin position="133"/>
        <end position="153"/>
    </location>
</feature>
<feature type="topological domain" description="Lumenal, vesicle" evidence="1">
    <location>
        <begin position="154"/>
        <end position="204"/>
    </location>
</feature>
<feature type="transmembrane region" description="Helical" evidence="3">
    <location>
        <begin position="205"/>
        <end position="225"/>
    </location>
</feature>
<feature type="topological domain" description="Cytoplasmic" evidence="1">
    <location>
        <begin position="226"/>
        <end position="265"/>
    </location>
</feature>
<feature type="transmembrane region" description="Helical" evidence="3">
    <location>
        <begin position="266"/>
        <end position="286"/>
    </location>
</feature>
<feature type="topological domain" description="Lumenal, vesicle" evidence="1">
    <location>
        <begin position="287"/>
        <end position="305"/>
    </location>
</feature>
<feature type="transmembrane region" description="Helical" evidence="3">
    <location>
        <begin position="306"/>
        <end position="326"/>
    </location>
</feature>
<feature type="topological domain" description="Cytoplasmic" evidence="1">
    <location>
        <begin position="327"/>
        <end position="341"/>
    </location>
</feature>
<feature type="transmembrane region" description="Helical" evidence="3">
    <location>
        <begin position="342"/>
        <end position="362"/>
    </location>
</feature>
<feature type="topological domain" description="Lumenal, vesicle" evidence="1">
    <location>
        <begin position="363"/>
        <end position="383"/>
    </location>
</feature>
<feature type="transmembrane region" description="Helical" evidence="3">
    <location>
        <begin position="384"/>
        <end position="404"/>
    </location>
</feature>
<feature type="topological domain" description="Cytoplasmic" evidence="1">
    <location>
        <begin position="405"/>
        <end position="438"/>
    </location>
</feature>
<feature type="transmembrane region" description="Helical" evidence="3">
    <location>
        <begin position="439"/>
        <end position="459"/>
    </location>
</feature>
<feature type="topological domain" description="Lumenal, vesicle" evidence="1">
    <location>
        <begin position="460"/>
        <end position="461"/>
    </location>
</feature>
<feature type="transmembrane region" description="Helical" evidence="3">
    <location>
        <begin position="462"/>
        <end position="482"/>
    </location>
</feature>
<feature type="topological domain" description="Cytoplasmic" evidence="1">
    <location>
        <begin position="483"/>
        <end position="489"/>
    </location>
</feature>
<feature type="transmembrane region" description="Helical" evidence="3">
    <location>
        <begin position="490"/>
        <end position="510"/>
    </location>
</feature>
<feature type="topological domain" description="Lumenal, vesicle" evidence="1">
    <location>
        <begin position="511"/>
        <end position="525"/>
    </location>
</feature>
<feature type="region of interest" description="Disordered" evidence="4">
    <location>
        <begin position="83"/>
        <end position="107"/>
    </location>
</feature>
<feature type="modified residue" description="3'-nitrotyrosine" evidence="2">
    <location>
        <position position="186"/>
    </location>
</feature>
<feature type="sequence variant" id="VAR_089461" description="In GEFSP12; uncertain significance; dbSNP:rs2084268435." evidence="6">
    <original>G</original>
    <variation>C</variation>
    <location>
        <position position="43"/>
    </location>
</feature>
<feature type="sequence variant" id="VAR_089462" description="In DEE114; uncertain significance; dbSNP:rs2145648056." evidence="7">
    <original>A</original>
    <variation>T</variation>
    <location>
        <position position="91"/>
    </location>
</feature>
<feature type="sequence variant" id="VAR_089463" description="In GEFSP12; uncertain significance; dbSNP:rs2084283325." evidence="6">
    <original>V</original>
    <variation>A</variation>
    <location>
        <position position="263"/>
    </location>
</feature>
<feature type="sequence variant" id="VAR_089464" description="In DEE114; uncertain significance; dbSNP:rs2145649990." evidence="7">
    <original>V</original>
    <variation>M</variation>
    <location>
        <position position="263"/>
    </location>
</feature>
<feature type="sequence variant" id="VAR_089465" description="In DEE114; uncertain significance; dbSNP:rs2145650002." evidence="7">
    <original>L</original>
    <variation>P</variation>
    <location>
        <position position="269"/>
    </location>
</feature>
<feature type="sequence variant" id="VAR_089466" description="In DEE114; uncertain significance; dbSNP:rs2145650130." evidence="7">
    <original>F</original>
    <variation>C</variation>
    <location>
        <position position="322"/>
    </location>
</feature>
<feature type="sequence variant" id="VAR_089467" description="In GEFSP12; likely pathogenic; dbSNP:rs2084284179." evidence="6">
    <original>M</original>
    <variation>T</variation>
    <location>
        <position position="330"/>
    </location>
</feature>
<feature type="sequence variant" id="VAR_048121" description="In dbSNP:rs34517228.">
    <original>S</original>
    <variation>G</variation>
    <location>
        <position position="423"/>
    </location>
</feature>
<feature type="sequence variant" id="VAR_089468" description="In GEFSP12; uncertain significance; dbSNP:rs1276643179." evidence="6">
    <original>L</original>
    <variation>F</variation>
    <location>
        <position position="445"/>
    </location>
</feature>
<feature type="sequence variant" id="VAR_089469" description="In GEFSP12; uncertain significance; dbSNP:rs2084286884." evidence="6">
    <original>G</original>
    <variation>D</variation>
    <location>
        <position position="461"/>
    </location>
</feature>
<feature type="sequence variant" id="VAR_089470" description="In GEFSP12; uncertain significance; dbSNP:rs2084286911." evidence="6">
    <original>T</original>
    <variation>R</variation>
    <location>
        <position position="464"/>
    </location>
</feature>
<feature type="sequence variant" id="VAR_089471" description="In GEFSP12; uncertain significance; dbSNP:rs2084286949." evidence="6">
    <original>G</original>
    <variation>S</variation>
    <location>
        <position position="465"/>
    </location>
</feature>
<feature type="sequence variant" id="VAR_089472" description="In GEFSP12; likely pathogenic; dbSNP:rs2084286998." evidence="6">
    <original>L</original>
    <variation>P</variation>
    <location>
        <position position="468"/>
    </location>
</feature>
<feature type="sequence conflict" description="In Ref. 4; AAH36458." evidence="9" ref="4">
    <original>K</original>
    <variation>R</variation>
    <location>
        <position position="261"/>
    </location>
</feature>
<evidence type="ECO:0000250" key="1">
    <source>
        <dbReference type="UniProtKB" id="O35458"/>
    </source>
</evidence>
<evidence type="ECO:0000250" key="2">
    <source>
        <dbReference type="UniProtKB" id="O35633"/>
    </source>
</evidence>
<evidence type="ECO:0000255" key="3"/>
<evidence type="ECO:0000256" key="4">
    <source>
        <dbReference type="SAM" id="MobiDB-lite"/>
    </source>
</evidence>
<evidence type="ECO:0000269" key="5">
    <source>
    </source>
</evidence>
<evidence type="ECO:0000269" key="6">
    <source>
    </source>
</evidence>
<evidence type="ECO:0000269" key="7">
    <source>
    </source>
</evidence>
<evidence type="ECO:0000303" key="8">
    <source>
    </source>
</evidence>
<evidence type="ECO:0000305" key="9"/>
<evidence type="ECO:0000312" key="10">
    <source>
        <dbReference type="HGNC" id="HGNC:11018"/>
    </source>
</evidence>
<accession>Q9H598</accession>
<accession>Q8N489</accession>
<sequence>MATLLRSKLSNVATSVSNKSQAKMSGMFARMGFQAATDEEAVGFAHCDDLDFEHRQGLQMDILKAEGEPCGDEGAEAPVEGDIHYQRGSGAPLPPSGSKDQVGGGGEFGGHDKPKITAWEAGWNVTNAIQGMFVLGLPYAILHGGYLGLFLIIFAAVVCCYTGKILIACLYEENEDGEVVRVRDSYVAIANACCAPRFPTLGGRVVNVAQIIELVMTCILYVVVSGNLMYNSFPGLPVSQKSWSIIATAVLLPCAFLKNLKAVSKFSLLCTLAHFVINILVIAYCLSRARDWAWEKVKFYIDVKKFPISIGIIVFSYTSQIFLPSLEGNMQQPSEFHCMMNWTHIAACVLKGLFALVAYLTWADETKEVITDNLPGSIRAVVNIFLVAKALLSYPLPFFAAVEVLEKSLFQEGSRAFFPACYSGDGRLKSWGLTLRCALVVFTLLMAIYVPHFALLMGLTGSLTGAGLCFLLPSLFHLRLLWRKLLWHQVFFDVAIFVIGGICSVSGFVHSLEGLIEAYRTNAED</sequence>